<organism>
    <name type="scientific">Wolbachia pipientis subsp. Culex pipiens (strain wPip)</name>
    <dbReference type="NCBI Taxonomy" id="570417"/>
    <lineage>
        <taxon>Bacteria</taxon>
        <taxon>Pseudomonadati</taxon>
        <taxon>Pseudomonadota</taxon>
        <taxon>Alphaproteobacteria</taxon>
        <taxon>Rickettsiales</taxon>
        <taxon>Anaplasmataceae</taxon>
        <taxon>Wolbachieae</taxon>
        <taxon>Wolbachia</taxon>
    </lineage>
</organism>
<dbReference type="EC" id="3.2.2.23" evidence="2"/>
<dbReference type="EC" id="4.2.99.18" evidence="2"/>
<dbReference type="EMBL" id="AM999887">
    <property type="protein sequence ID" value="CAQ54990.1"/>
    <property type="molecule type" value="Genomic_DNA"/>
</dbReference>
<dbReference type="RefSeq" id="WP_007302281.1">
    <property type="nucleotide sequence ID" value="NC_010981.1"/>
</dbReference>
<dbReference type="SMR" id="B3CM71"/>
<dbReference type="KEGG" id="wpi:WP0882"/>
<dbReference type="eggNOG" id="COG0266">
    <property type="taxonomic scope" value="Bacteria"/>
</dbReference>
<dbReference type="HOGENOM" id="CLU_038423_1_1_5"/>
<dbReference type="Proteomes" id="UP000008814">
    <property type="component" value="Chromosome"/>
</dbReference>
<dbReference type="GO" id="GO:0034039">
    <property type="term" value="F:8-oxo-7,8-dihydroguanine DNA N-glycosylase activity"/>
    <property type="evidence" value="ECO:0007669"/>
    <property type="project" value="TreeGrafter"/>
</dbReference>
<dbReference type="GO" id="GO:0140078">
    <property type="term" value="F:class I DNA-(apurinic or apyrimidinic site) endonuclease activity"/>
    <property type="evidence" value="ECO:0007669"/>
    <property type="project" value="UniProtKB-EC"/>
</dbReference>
<dbReference type="GO" id="GO:0003684">
    <property type="term" value="F:damaged DNA binding"/>
    <property type="evidence" value="ECO:0007669"/>
    <property type="project" value="InterPro"/>
</dbReference>
<dbReference type="GO" id="GO:0008270">
    <property type="term" value="F:zinc ion binding"/>
    <property type="evidence" value="ECO:0007669"/>
    <property type="project" value="UniProtKB-UniRule"/>
</dbReference>
<dbReference type="GO" id="GO:0006284">
    <property type="term" value="P:base-excision repair"/>
    <property type="evidence" value="ECO:0007669"/>
    <property type="project" value="InterPro"/>
</dbReference>
<dbReference type="CDD" id="cd08966">
    <property type="entry name" value="EcFpg-like_N"/>
    <property type="match status" value="1"/>
</dbReference>
<dbReference type="FunFam" id="1.10.8.50:FF:000003">
    <property type="entry name" value="Formamidopyrimidine-DNA glycosylase"/>
    <property type="match status" value="1"/>
</dbReference>
<dbReference type="Gene3D" id="1.10.8.50">
    <property type="match status" value="1"/>
</dbReference>
<dbReference type="Gene3D" id="3.20.190.10">
    <property type="entry name" value="MutM-like, N-terminal"/>
    <property type="match status" value="1"/>
</dbReference>
<dbReference type="HAMAP" id="MF_00103">
    <property type="entry name" value="Fapy_DNA_glycosyl"/>
    <property type="match status" value="1"/>
</dbReference>
<dbReference type="InterPro" id="IPR015886">
    <property type="entry name" value="DNA_glyclase/AP_lyase_DNA-bd"/>
</dbReference>
<dbReference type="InterPro" id="IPR015887">
    <property type="entry name" value="DNA_glyclase_Znf_dom_DNA_BS"/>
</dbReference>
<dbReference type="InterPro" id="IPR020629">
    <property type="entry name" value="Formamido-pyr_DNA_Glyclase"/>
</dbReference>
<dbReference type="InterPro" id="IPR012319">
    <property type="entry name" value="FPG_cat"/>
</dbReference>
<dbReference type="InterPro" id="IPR035937">
    <property type="entry name" value="MutM-like_N-ter"/>
</dbReference>
<dbReference type="InterPro" id="IPR010979">
    <property type="entry name" value="Ribosomal_uS13-like_H2TH"/>
</dbReference>
<dbReference type="InterPro" id="IPR000214">
    <property type="entry name" value="Znf_DNA_glyclase/AP_lyase"/>
</dbReference>
<dbReference type="InterPro" id="IPR010663">
    <property type="entry name" value="Znf_FPG/IleRS"/>
</dbReference>
<dbReference type="NCBIfam" id="TIGR00577">
    <property type="entry name" value="fpg"/>
    <property type="match status" value="1"/>
</dbReference>
<dbReference type="NCBIfam" id="NF002211">
    <property type="entry name" value="PRK01103.1"/>
    <property type="match status" value="1"/>
</dbReference>
<dbReference type="PANTHER" id="PTHR22993">
    <property type="entry name" value="FORMAMIDOPYRIMIDINE-DNA GLYCOSYLASE"/>
    <property type="match status" value="1"/>
</dbReference>
<dbReference type="PANTHER" id="PTHR22993:SF9">
    <property type="entry name" value="FORMAMIDOPYRIMIDINE-DNA GLYCOSYLASE"/>
    <property type="match status" value="1"/>
</dbReference>
<dbReference type="Pfam" id="PF01149">
    <property type="entry name" value="Fapy_DNA_glyco"/>
    <property type="match status" value="1"/>
</dbReference>
<dbReference type="Pfam" id="PF06831">
    <property type="entry name" value="H2TH"/>
    <property type="match status" value="1"/>
</dbReference>
<dbReference type="Pfam" id="PF06827">
    <property type="entry name" value="zf-FPG_IleRS"/>
    <property type="match status" value="1"/>
</dbReference>
<dbReference type="SMART" id="SM00898">
    <property type="entry name" value="Fapy_DNA_glyco"/>
    <property type="match status" value="1"/>
</dbReference>
<dbReference type="SMART" id="SM01232">
    <property type="entry name" value="H2TH"/>
    <property type="match status" value="1"/>
</dbReference>
<dbReference type="SUPFAM" id="SSF57716">
    <property type="entry name" value="Glucocorticoid receptor-like (DNA-binding domain)"/>
    <property type="match status" value="1"/>
</dbReference>
<dbReference type="SUPFAM" id="SSF81624">
    <property type="entry name" value="N-terminal domain of MutM-like DNA repair proteins"/>
    <property type="match status" value="1"/>
</dbReference>
<dbReference type="SUPFAM" id="SSF46946">
    <property type="entry name" value="S13-like H2TH domain"/>
    <property type="match status" value="1"/>
</dbReference>
<dbReference type="PROSITE" id="PS51068">
    <property type="entry name" value="FPG_CAT"/>
    <property type="match status" value="1"/>
</dbReference>
<dbReference type="PROSITE" id="PS01242">
    <property type="entry name" value="ZF_FPG_1"/>
    <property type="match status" value="1"/>
</dbReference>
<dbReference type="PROSITE" id="PS51066">
    <property type="entry name" value="ZF_FPG_2"/>
    <property type="match status" value="1"/>
</dbReference>
<accession>B3CM71</accession>
<gene>
    <name evidence="2" type="primary">mutM</name>
    <name evidence="2" type="synonym">fpg</name>
    <name type="ordered locus">WP0882</name>
</gene>
<proteinExistence type="inferred from homology"/>
<protein>
    <recommendedName>
        <fullName evidence="2">Formamidopyrimidine-DNA glycosylase</fullName>
        <shortName evidence="2">Fapy-DNA glycosylase</shortName>
        <ecNumber evidence="2">3.2.2.23</ecNumber>
    </recommendedName>
    <alternativeName>
        <fullName evidence="2">DNA-(apurinic or apyrimidinic site) lyase MutM</fullName>
        <shortName evidence="2">AP lyase MutM</shortName>
        <ecNumber evidence="2">4.2.99.18</ecNumber>
    </alternativeName>
</protein>
<name>FPG_WOLPP</name>
<keyword id="KW-0227">DNA damage</keyword>
<keyword id="KW-0234">DNA repair</keyword>
<keyword id="KW-0238">DNA-binding</keyword>
<keyword id="KW-0326">Glycosidase</keyword>
<keyword id="KW-0378">Hydrolase</keyword>
<keyword id="KW-0456">Lyase</keyword>
<keyword id="KW-0479">Metal-binding</keyword>
<keyword id="KW-0511">Multifunctional enzyme</keyword>
<keyword id="KW-0862">Zinc</keyword>
<keyword id="KW-0863">Zinc-finger</keyword>
<feature type="initiator methionine" description="Removed" evidence="1">
    <location>
        <position position="1"/>
    </location>
</feature>
<feature type="chain" id="PRO_1000094084" description="Formamidopyrimidine-DNA glycosylase">
    <location>
        <begin position="2"/>
        <end position="271"/>
    </location>
</feature>
<feature type="zinc finger region" description="FPG-type" evidence="2">
    <location>
        <begin position="237"/>
        <end position="271"/>
    </location>
</feature>
<feature type="active site" description="Schiff-base intermediate with DNA" evidence="2">
    <location>
        <position position="2"/>
    </location>
</feature>
<feature type="active site" description="Proton donor" evidence="2">
    <location>
        <position position="3"/>
    </location>
</feature>
<feature type="active site" description="Proton donor; for beta-elimination activity" evidence="2">
    <location>
        <position position="58"/>
    </location>
</feature>
<feature type="active site" description="Proton donor; for delta-elimination activity" evidence="2">
    <location>
        <position position="261"/>
    </location>
</feature>
<feature type="binding site" evidence="2">
    <location>
        <position position="92"/>
    </location>
    <ligand>
        <name>DNA</name>
        <dbReference type="ChEBI" id="CHEBI:16991"/>
    </ligand>
</feature>
<feature type="binding site" evidence="2">
    <location>
        <position position="111"/>
    </location>
    <ligand>
        <name>DNA</name>
        <dbReference type="ChEBI" id="CHEBI:16991"/>
    </ligand>
</feature>
<feature type="binding site" evidence="2">
    <location>
        <position position="152"/>
    </location>
    <ligand>
        <name>DNA</name>
        <dbReference type="ChEBI" id="CHEBI:16991"/>
    </ligand>
</feature>
<sequence>MPELPEVEVISNFLFDKIKNKKISNVTVNNWNLRVPITKNIDDLLKGKVINDIKRRGKYIISNIDASMAVIIHLGMSGKLIYVEDNQAQNKHDHVIFLFSDNTSLIFNDPRRFGLVIVLNREQELNFFNNLGIEPLTDEFDGHYLQKLLKNRKANIKSVLMNNKLIVGVGNIYASESLFRARISPLRLAQDLTYIECEKLAIEIKNTLSDAIAAGGSTLKDYAQPSGSAGYFQNNFYVYGKVQKPCRICNNIITLIRQNGRSTYFCNACQN</sequence>
<comment type="function">
    <text evidence="2">Involved in base excision repair of DNA damaged by oxidation or by mutagenic agents. Acts as a DNA glycosylase that recognizes and removes damaged bases. Has a preference for oxidized purines, such as 7,8-dihydro-8-oxoguanine (8-oxoG). Has AP (apurinic/apyrimidinic) lyase activity and introduces nicks in the DNA strand. Cleaves the DNA backbone by beta-delta elimination to generate a single-strand break at the site of the removed base with both 3'- and 5'-phosphates.</text>
</comment>
<comment type="catalytic activity">
    <reaction evidence="2">
        <text>Hydrolysis of DNA containing ring-opened 7-methylguanine residues, releasing 2,6-diamino-4-hydroxy-5-(N-methyl)formamidopyrimidine.</text>
        <dbReference type="EC" id="3.2.2.23"/>
    </reaction>
</comment>
<comment type="catalytic activity">
    <reaction evidence="2">
        <text>2'-deoxyribonucleotide-(2'-deoxyribose 5'-phosphate)-2'-deoxyribonucleotide-DNA = a 3'-end 2'-deoxyribonucleotide-(2,3-dehydro-2,3-deoxyribose 5'-phosphate)-DNA + a 5'-end 5'-phospho-2'-deoxyribonucleoside-DNA + H(+)</text>
        <dbReference type="Rhea" id="RHEA:66592"/>
        <dbReference type="Rhea" id="RHEA-COMP:13180"/>
        <dbReference type="Rhea" id="RHEA-COMP:16897"/>
        <dbReference type="Rhea" id="RHEA-COMP:17067"/>
        <dbReference type="ChEBI" id="CHEBI:15378"/>
        <dbReference type="ChEBI" id="CHEBI:136412"/>
        <dbReference type="ChEBI" id="CHEBI:157695"/>
        <dbReference type="ChEBI" id="CHEBI:167181"/>
        <dbReference type="EC" id="4.2.99.18"/>
    </reaction>
</comment>
<comment type="cofactor">
    <cofactor evidence="2">
        <name>Zn(2+)</name>
        <dbReference type="ChEBI" id="CHEBI:29105"/>
    </cofactor>
    <text evidence="2">Binds 1 zinc ion per subunit.</text>
</comment>
<comment type="subunit">
    <text evidence="2">Monomer.</text>
</comment>
<comment type="similarity">
    <text evidence="2">Belongs to the FPG family.</text>
</comment>
<reference key="1">
    <citation type="journal article" date="2008" name="Mol. Biol. Evol.">
        <title>Genome evolution of Wolbachia strain wPip from the Culex pipiens group.</title>
        <authorList>
            <person name="Klasson L."/>
            <person name="Walker T."/>
            <person name="Sebaihia M."/>
            <person name="Sanders M.J."/>
            <person name="Quail M.A."/>
            <person name="Lord A."/>
            <person name="Sanders S."/>
            <person name="Earl J."/>
            <person name="O'Neill S.L."/>
            <person name="Thomson N."/>
            <person name="Sinkins S.P."/>
            <person name="Parkhill J."/>
        </authorList>
    </citation>
    <scope>NUCLEOTIDE SEQUENCE [LARGE SCALE GENOMIC DNA]</scope>
    <source>
        <strain>wPip</strain>
    </source>
</reference>
<evidence type="ECO:0000250" key="1"/>
<evidence type="ECO:0000255" key="2">
    <source>
        <dbReference type="HAMAP-Rule" id="MF_00103"/>
    </source>
</evidence>